<reference key="1">
    <citation type="submission" date="2006-12" db="EMBL/GenBank/DDBJ databases">
        <title>Complete sequence of chromosome 1 of Acidovorax sp. JS42.</title>
        <authorList>
            <person name="Copeland A."/>
            <person name="Lucas S."/>
            <person name="Lapidus A."/>
            <person name="Barry K."/>
            <person name="Detter J.C."/>
            <person name="Glavina del Rio T."/>
            <person name="Dalin E."/>
            <person name="Tice H."/>
            <person name="Pitluck S."/>
            <person name="Chertkov O."/>
            <person name="Brettin T."/>
            <person name="Bruce D."/>
            <person name="Han C."/>
            <person name="Tapia R."/>
            <person name="Gilna P."/>
            <person name="Schmutz J."/>
            <person name="Larimer F."/>
            <person name="Land M."/>
            <person name="Hauser L."/>
            <person name="Kyrpides N."/>
            <person name="Kim E."/>
            <person name="Stahl D."/>
            <person name="Richardson P."/>
        </authorList>
    </citation>
    <scope>NUCLEOTIDE SEQUENCE [LARGE SCALE GENOMIC DNA]</scope>
    <source>
        <strain>JS42</strain>
    </source>
</reference>
<gene>
    <name evidence="1" type="primary">pyrB</name>
    <name type="ordered locus">Ajs_3570</name>
</gene>
<dbReference type="EC" id="2.1.3.2" evidence="1"/>
<dbReference type="EMBL" id="CP000539">
    <property type="protein sequence ID" value="ABM43682.1"/>
    <property type="molecule type" value="Genomic_DNA"/>
</dbReference>
<dbReference type="SMR" id="A1WBQ7"/>
<dbReference type="STRING" id="232721.Ajs_3570"/>
<dbReference type="KEGG" id="ajs:Ajs_3570"/>
<dbReference type="eggNOG" id="COG0540">
    <property type="taxonomic scope" value="Bacteria"/>
</dbReference>
<dbReference type="HOGENOM" id="CLU_043846_2_0_4"/>
<dbReference type="UniPathway" id="UPA00070">
    <property type="reaction ID" value="UER00116"/>
</dbReference>
<dbReference type="Proteomes" id="UP000000645">
    <property type="component" value="Chromosome"/>
</dbReference>
<dbReference type="GO" id="GO:0005829">
    <property type="term" value="C:cytosol"/>
    <property type="evidence" value="ECO:0007669"/>
    <property type="project" value="TreeGrafter"/>
</dbReference>
<dbReference type="GO" id="GO:0016597">
    <property type="term" value="F:amino acid binding"/>
    <property type="evidence" value="ECO:0007669"/>
    <property type="project" value="InterPro"/>
</dbReference>
<dbReference type="GO" id="GO:0004070">
    <property type="term" value="F:aspartate carbamoyltransferase activity"/>
    <property type="evidence" value="ECO:0007669"/>
    <property type="project" value="UniProtKB-UniRule"/>
</dbReference>
<dbReference type="GO" id="GO:0006207">
    <property type="term" value="P:'de novo' pyrimidine nucleobase biosynthetic process"/>
    <property type="evidence" value="ECO:0007669"/>
    <property type="project" value="InterPro"/>
</dbReference>
<dbReference type="GO" id="GO:0044205">
    <property type="term" value="P:'de novo' UMP biosynthetic process"/>
    <property type="evidence" value="ECO:0007669"/>
    <property type="project" value="UniProtKB-UniRule"/>
</dbReference>
<dbReference type="GO" id="GO:0006520">
    <property type="term" value="P:amino acid metabolic process"/>
    <property type="evidence" value="ECO:0007669"/>
    <property type="project" value="InterPro"/>
</dbReference>
<dbReference type="FunFam" id="3.40.50.1370:FF:000007">
    <property type="entry name" value="Aspartate carbamoyltransferase"/>
    <property type="match status" value="1"/>
</dbReference>
<dbReference type="Gene3D" id="3.40.50.1370">
    <property type="entry name" value="Aspartate/ornithine carbamoyltransferase"/>
    <property type="match status" value="2"/>
</dbReference>
<dbReference type="HAMAP" id="MF_00001">
    <property type="entry name" value="Asp_carb_tr"/>
    <property type="match status" value="1"/>
</dbReference>
<dbReference type="InterPro" id="IPR006132">
    <property type="entry name" value="Asp/Orn_carbamoyltranf_P-bd"/>
</dbReference>
<dbReference type="InterPro" id="IPR006130">
    <property type="entry name" value="Asp/Orn_carbamoylTrfase"/>
</dbReference>
<dbReference type="InterPro" id="IPR036901">
    <property type="entry name" value="Asp/Orn_carbamoylTrfase_sf"/>
</dbReference>
<dbReference type="InterPro" id="IPR002082">
    <property type="entry name" value="Asp_carbamoyltransf"/>
</dbReference>
<dbReference type="InterPro" id="IPR006131">
    <property type="entry name" value="Asp_carbamoyltransf_Asp/Orn-bd"/>
</dbReference>
<dbReference type="NCBIfam" id="TIGR00670">
    <property type="entry name" value="asp_carb_tr"/>
    <property type="match status" value="1"/>
</dbReference>
<dbReference type="NCBIfam" id="NF002032">
    <property type="entry name" value="PRK00856.1"/>
    <property type="match status" value="1"/>
</dbReference>
<dbReference type="PANTHER" id="PTHR45753:SF6">
    <property type="entry name" value="ASPARTATE CARBAMOYLTRANSFERASE"/>
    <property type="match status" value="1"/>
</dbReference>
<dbReference type="PANTHER" id="PTHR45753">
    <property type="entry name" value="ORNITHINE CARBAMOYLTRANSFERASE, MITOCHONDRIAL"/>
    <property type="match status" value="1"/>
</dbReference>
<dbReference type="Pfam" id="PF00185">
    <property type="entry name" value="OTCace"/>
    <property type="match status" value="1"/>
</dbReference>
<dbReference type="Pfam" id="PF02729">
    <property type="entry name" value="OTCace_N"/>
    <property type="match status" value="1"/>
</dbReference>
<dbReference type="PRINTS" id="PR00100">
    <property type="entry name" value="AOTCASE"/>
</dbReference>
<dbReference type="PRINTS" id="PR00101">
    <property type="entry name" value="ATCASE"/>
</dbReference>
<dbReference type="SUPFAM" id="SSF53671">
    <property type="entry name" value="Aspartate/ornithine carbamoyltransferase"/>
    <property type="match status" value="1"/>
</dbReference>
<dbReference type="PROSITE" id="PS00097">
    <property type="entry name" value="CARBAMOYLTRANSFERASE"/>
    <property type="match status" value="1"/>
</dbReference>
<accession>A1WBQ7</accession>
<keyword id="KW-0665">Pyrimidine biosynthesis</keyword>
<keyword id="KW-0808">Transferase</keyword>
<sequence>MLYKRNPQLNKNGELIHLLSIEGLPKDIVTHILDTATNFVSVQEREVKKVPLLRGKSVFNLFFENSTRTRTTFEIAAKRLSADVFNLDIARSSTAKGETLLDTIDNLSAMAADIFVVRHSESGAPYLIAQHVAPHVHVVNAGDGRHSHPTQGLLDMYTIRHYKKDFSNLTVAIVGDVLHSRVARSDIHALTTLGAAEVRVVGPRTLVPSDMAQMGVRVFHNLEEGIKGCDVVITLRLQNERMSGALLPSSQEYFKSFGLTPEKLRLAKPDAIVMHPGPINRGVEIDSAVVDGPQAVILPQVTFGIAVRMAVMSIVAGNEA</sequence>
<proteinExistence type="inferred from homology"/>
<evidence type="ECO:0000255" key="1">
    <source>
        <dbReference type="HAMAP-Rule" id="MF_00001"/>
    </source>
</evidence>
<name>PYRB_ACISJ</name>
<organism>
    <name type="scientific">Acidovorax sp. (strain JS42)</name>
    <dbReference type="NCBI Taxonomy" id="232721"/>
    <lineage>
        <taxon>Bacteria</taxon>
        <taxon>Pseudomonadati</taxon>
        <taxon>Pseudomonadota</taxon>
        <taxon>Betaproteobacteria</taxon>
        <taxon>Burkholderiales</taxon>
        <taxon>Comamonadaceae</taxon>
        <taxon>Acidovorax</taxon>
    </lineage>
</organism>
<protein>
    <recommendedName>
        <fullName evidence="1">Aspartate carbamoyltransferase catalytic subunit</fullName>
        <ecNumber evidence="1">2.1.3.2</ecNumber>
    </recommendedName>
    <alternativeName>
        <fullName evidence="1">Aspartate transcarbamylase</fullName>
        <shortName evidence="1">ATCase</shortName>
    </alternativeName>
</protein>
<comment type="function">
    <text evidence="1">Catalyzes the condensation of carbamoyl phosphate and aspartate to form carbamoyl aspartate and inorganic phosphate, the committed step in the de novo pyrimidine nucleotide biosynthesis pathway.</text>
</comment>
<comment type="catalytic activity">
    <reaction evidence="1">
        <text>carbamoyl phosphate + L-aspartate = N-carbamoyl-L-aspartate + phosphate + H(+)</text>
        <dbReference type="Rhea" id="RHEA:20013"/>
        <dbReference type="ChEBI" id="CHEBI:15378"/>
        <dbReference type="ChEBI" id="CHEBI:29991"/>
        <dbReference type="ChEBI" id="CHEBI:32814"/>
        <dbReference type="ChEBI" id="CHEBI:43474"/>
        <dbReference type="ChEBI" id="CHEBI:58228"/>
        <dbReference type="EC" id="2.1.3.2"/>
    </reaction>
</comment>
<comment type="pathway">
    <text evidence="1">Pyrimidine metabolism; UMP biosynthesis via de novo pathway; (S)-dihydroorotate from bicarbonate: step 2/3.</text>
</comment>
<comment type="subunit">
    <text evidence="1">Heterododecamer (2C3:3R2) of six catalytic PyrB chains organized as two trimers (C3), and six regulatory PyrI chains organized as three dimers (R2).</text>
</comment>
<comment type="similarity">
    <text evidence="1">Belongs to the aspartate/ornithine carbamoyltransferase superfamily. ATCase family.</text>
</comment>
<feature type="chain" id="PRO_0000321063" description="Aspartate carbamoyltransferase catalytic subunit">
    <location>
        <begin position="1"/>
        <end position="320"/>
    </location>
</feature>
<feature type="binding site" evidence="1">
    <location>
        <position position="68"/>
    </location>
    <ligand>
        <name>carbamoyl phosphate</name>
        <dbReference type="ChEBI" id="CHEBI:58228"/>
    </ligand>
</feature>
<feature type="binding site" evidence="1">
    <location>
        <position position="69"/>
    </location>
    <ligand>
        <name>carbamoyl phosphate</name>
        <dbReference type="ChEBI" id="CHEBI:58228"/>
    </ligand>
</feature>
<feature type="binding site" evidence="1">
    <location>
        <position position="96"/>
    </location>
    <ligand>
        <name>L-aspartate</name>
        <dbReference type="ChEBI" id="CHEBI:29991"/>
    </ligand>
</feature>
<feature type="binding site" evidence="1">
    <location>
        <position position="118"/>
    </location>
    <ligand>
        <name>carbamoyl phosphate</name>
        <dbReference type="ChEBI" id="CHEBI:58228"/>
    </ligand>
</feature>
<feature type="binding site" evidence="1">
    <location>
        <position position="148"/>
    </location>
    <ligand>
        <name>carbamoyl phosphate</name>
        <dbReference type="ChEBI" id="CHEBI:58228"/>
    </ligand>
</feature>
<feature type="binding site" evidence="1">
    <location>
        <position position="151"/>
    </location>
    <ligand>
        <name>carbamoyl phosphate</name>
        <dbReference type="ChEBI" id="CHEBI:58228"/>
    </ligand>
</feature>
<feature type="binding site" evidence="1">
    <location>
        <position position="181"/>
    </location>
    <ligand>
        <name>L-aspartate</name>
        <dbReference type="ChEBI" id="CHEBI:29991"/>
    </ligand>
</feature>
<feature type="binding site" evidence="1">
    <location>
        <position position="236"/>
    </location>
    <ligand>
        <name>L-aspartate</name>
        <dbReference type="ChEBI" id="CHEBI:29991"/>
    </ligand>
</feature>
<feature type="binding site" evidence="1">
    <location>
        <position position="277"/>
    </location>
    <ligand>
        <name>carbamoyl phosphate</name>
        <dbReference type="ChEBI" id="CHEBI:58228"/>
    </ligand>
</feature>
<feature type="binding site" evidence="1">
    <location>
        <position position="278"/>
    </location>
    <ligand>
        <name>carbamoyl phosphate</name>
        <dbReference type="ChEBI" id="CHEBI:58228"/>
    </ligand>
</feature>